<reference key="1">
    <citation type="journal article" date="2009" name="Proc. Natl. Acad. Sci. U.S.A.">
        <title>Hamiltonella defensa, genome evolution of protective bacterial endosymbiont from pathogenic ancestors.</title>
        <authorList>
            <person name="Degnan P.H."/>
            <person name="Yu Y."/>
            <person name="Sisneros N."/>
            <person name="Wing R.A."/>
            <person name="Moran N.A."/>
        </authorList>
    </citation>
    <scope>NUCLEOTIDE SEQUENCE [LARGE SCALE GENOMIC DNA]</scope>
    <source>
        <strain>5AT</strain>
    </source>
</reference>
<sequence length="131" mass="14170">MSMQDPIADMLTRIRNGQAANKVGVTMPSSKLKVAIAEVLKEEGFINSFTVEGDITNPTLVIILKYYQGKPVVERIDRISCPSLRIYKKRDALPKVMGGMGIAIISTSKGVITDRAARQAGLGGEVICYVA</sequence>
<gene>
    <name evidence="1" type="primary">rpsH</name>
    <name type="ordered locus">HDEF_1852</name>
</gene>
<name>RS8_HAMD5</name>
<keyword id="KW-0687">Ribonucleoprotein</keyword>
<keyword id="KW-0689">Ribosomal protein</keyword>
<keyword id="KW-0694">RNA-binding</keyword>
<keyword id="KW-0699">rRNA-binding</keyword>
<comment type="function">
    <text evidence="1">One of the primary rRNA binding proteins, it binds directly to 16S rRNA central domain where it helps coordinate assembly of the platform of the 30S subunit.</text>
</comment>
<comment type="subunit">
    <text evidence="1">Part of the 30S ribosomal subunit. Contacts proteins S5 and S12.</text>
</comment>
<comment type="similarity">
    <text evidence="1">Belongs to the universal ribosomal protein uS8 family.</text>
</comment>
<proteinExistence type="inferred from homology"/>
<dbReference type="EMBL" id="CP001277">
    <property type="protein sequence ID" value="ACQ68447.1"/>
    <property type="molecule type" value="Genomic_DNA"/>
</dbReference>
<dbReference type="RefSeq" id="WP_015874211.1">
    <property type="nucleotide sequence ID" value="NC_012751.1"/>
</dbReference>
<dbReference type="SMR" id="C4K7A4"/>
<dbReference type="STRING" id="572265.HDEF_1852"/>
<dbReference type="GeneID" id="66261437"/>
<dbReference type="KEGG" id="hde:HDEF_1852"/>
<dbReference type="eggNOG" id="COG0096">
    <property type="taxonomic scope" value="Bacteria"/>
</dbReference>
<dbReference type="HOGENOM" id="CLU_098428_0_0_6"/>
<dbReference type="Proteomes" id="UP000002334">
    <property type="component" value="Chromosome"/>
</dbReference>
<dbReference type="GO" id="GO:1990904">
    <property type="term" value="C:ribonucleoprotein complex"/>
    <property type="evidence" value="ECO:0007669"/>
    <property type="project" value="UniProtKB-KW"/>
</dbReference>
<dbReference type="GO" id="GO:0005840">
    <property type="term" value="C:ribosome"/>
    <property type="evidence" value="ECO:0007669"/>
    <property type="project" value="UniProtKB-KW"/>
</dbReference>
<dbReference type="GO" id="GO:0019843">
    <property type="term" value="F:rRNA binding"/>
    <property type="evidence" value="ECO:0007669"/>
    <property type="project" value="UniProtKB-UniRule"/>
</dbReference>
<dbReference type="GO" id="GO:0003735">
    <property type="term" value="F:structural constituent of ribosome"/>
    <property type="evidence" value="ECO:0007669"/>
    <property type="project" value="InterPro"/>
</dbReference>
<dbReference type="GO" id="GO:0006412">
    <property type="term" value="P:translation"/>
    <property type="evidence" value="ECO:0007669"/>
    <property type="project" value="UniProtKB-UniRule"/>
</dbReference>
<dbReference type="FunFam" id="3.30.1370.30:FF:000003">
    <property type="entry name" value="30S ribosomal protein S8"/>
    <property type="match status" value="1"/>
</dbReference>
<dbReference type="FunFam" id="3.30.1490.10:FF:000001">
    <property type="entry name" value="30S ribosomal protein S8"/>
    <property type="match status" value="1"/>
</dbReference>
<dbReference type="Gene3D" id="3.30.1370.30">
    <property type="match status" value="1"/>
</dbReference>
<dbReference type="Gene3D" id="3.30.1490.10">
    <property type="match status" value="1"/>
</dbReference>
<dbReference type="HAMAP" id="MF_01302_B">
    <property type="entry name" value="Ribosomal_uS8_B"/>
    <property type="match status" value="1"/>
</dbReference>
<dbReference type="InterPro" id="IPR000630">
    <property type="entry name" value="Ribosomal_uS8"/>
</dbReference>
<dbReference type="InterPro" id="IPR047863">
    <property type="entry name" value="Ribosomal_uS8_CS"/>
</dbReference>
<dbReference type="InterPro" id="IPR035987">
    <property type="entry name" value="Ribosomal_uS8_sf"/>
</dbReference>
<dbReference type="NCBIfam" id="NF001109">
    <property type="entry name" value="PRK00136.1"/>
    <property type="match status" value="1"/>
</dbReference>
<dbReference type="PANTHER" id="PTHR11758">
    <property type="entry name" value="40S RIBOSOMAL PROTEIN S15A"/>
    <property type="match status" value="1"/>
</dbReference>
<dbReference type="Pfam" id="PF00410">
    <property type="entry name" value="Ribosomal_S8"/>
    <property type="match status" value="1"/>
</dbReference>
<dbReference type="SUPFAM" id="SSF56047">
    <property type="entry name" value="Ribosomal protein S8"/>
    <property type="match status" value="1"/>
</dbReference>
<dbReference type="PROSITE" id="PS00053">
    <property type="entry name" value="RIBOSOMAL_S8"/>
    <property type="match status" value="1"/>
</dbReference>
<protein>
    <recommendedName>
        <fullName evidence="1">Small ribosomal subunit protein uS8</fullName>
    </recommendedName>
    <alternativeName>
        <fullName evidence="2">30S ribosomal protein S8</fullName>
    </alternativeName>
</protein>
<organism>
    <name type="scientific">Hamiltonella defensa subsp. Acyrthosiphon pisum (strain 5AT)</name>
    <dbReference type="NCBI Taxonomy" id="572265"/>
    <lineage>
        <taxon>Bacteria</taxon>
        <taxon>Pseudomonadati</taxon>
        <taxon>Pseudomonadota</taxon>
        <taxon>Gammaproteobacteria</taxon>
        <taxon>Enterobacterales</taxon>
        <taxon>Enterobacteriaceae</taxon>
        <taxon>aphid secondary symbionts</taxon>
        <taxon>Candidatus Hamiltonella</taxon>
    </lineage>
</organism>
<accession>C4K7A4</accession>
<feature type="chain" id="PRO_1000214255" description="Small ribosomal subunit protein uS8">
    <location>
        <begin position="1"/>
        <end position="131"/>
    </location>
</feature>
<evidence type="ECO:0000255" key="1">
    <source>
        <dbReference type="HAMAP-Rule" id="MF_01302"/>
    </source>
</evidence>
<evidence type="ECO:0000305" key="2"/>